<gene>
    <name evidence="3" type="primary">RBKS</name>
    <name type="synonym">RBSK</name>
</gene>
<organism>
    <name type="scientific">Homo sapiens</name>
    <name type="common">Human</name>
    <dbReference type="NCBI Taxonomy" id="9606"/>
    <lineage>
        <taxon>Eukaryota</taxon>
        <taxon>Metazoa</taxon>
        <taxon>Chordata</taxon>
        <taxon>Craniata</taxon>
        <taxon>Vertebrata</taxon>
        <taxon>Euteleostomi</taxon>
        <taxon>Mammalia</taxon>
        <taxon>Eutheria</taxon>
        <taxon>Euarchontoglires</taxon>
        <taxon>Primates</taxon>
        <taxon>Haplorrhini</taxon>
        <taxon>Catarrhini</taxon>
        <taxon>Hominidae</taxon>
        <taxon>Homo</taxon>
    </lineage>
</organism>
<proteinExistence type="evidence at protein level"/>
<accession>Q9H477</accession>
<accession>A9UK04</accession>
<accession>B4DV96</accession>
<name>RBSK_HUMAN</name>
<reference key="1">
    <citation type="thesis" date="2000" institute="University of Edinburgh" country="United Kingdom">
        <authorList>
            <person name="Wightman P.J."/>
        </authorList>
    </citation>
    <scope>NUCLEOTIDE SEQUENCE [MRNA] (ISOFORM 1)</scope>
</reference>
<reference key="2">
    <citation type="submission" date="2004-06" db="EMBL/GenBank/DDBJ databases">
        <title>Cloning and characterization of RBS protein.</title>
        <authorList>
            <person name="Li X."/>
            <person name="Mao Y."/>
            <person name="Xie Y."/>
        </authorList>
    </citation>
    <scope>NUCLEOTIDE SEQUENCE [MRNA] (ISOFORM 1)</scope>
</reference>
<reference key="3">
    <citation type="journal article" date="2004" name="Nat. Genet.">
        <title>Complete sequencing and characterization of 21,243 full-length human cDNAs.</title>
        <authorList>
            <person name="Ota T."/>
            <person name="Suzuki Y."/>
            <person name="Nishikawa T."/>
            <person name="Otsuki T."/>
            <person name="Sugiyama T."/>
            <person name="Irie R."/>
            <person name="Wakamatsu A."/>
            <person name="Hayashi K."/>
            <person name="Sato H."/>
            <person name="Nagai K."/>
            <person name="Kimura K."/>
            <person name="Makita H."/>
            <person name="Sekine M."/>
            <person name="Obayashi M."/>
            <person name="Nishi T."/>
            <person name="Shibahara T."/>
            <person name="Tanaka T."/>
            <person name="Ishii S."/>
            <person name="Yamamoto J."/>
            <person name="Saito K."/>
            <person name="Kawai Y."/>
            <person name="Isono Y."/>
            <person name="Nakamura Y."/>
            <person name="Nagahari K."/>
            <person name="Murakami K."/>
            <person name="Yasuda T."/>
            <person name="Iwayanagi T."/>
            <person name="Wagatsuma M."/>
            <person name="Shiratori A."/>
            <person name="Sudo H."/>
            <person name="Hosoiri T."/>
            <person name="Kaku Y."/>
            <person name="Kodaira H."/>
            <person name="Kondo H."/>
            <person name="Sugawara M."/>
            <person name="Takahashi M."/>
            <person name="Kanda K."/>
            <person name="Yokoi T."/>
            <person name="Furuya T."/>
            <person name="Kikkawa E."/>
            <person name="Omura Y."/>
            <person name="Abe K."/>
            <person name="Kamihara K."/>
            <person name="Katsuta N."/>
            <person name="Sato K."/>
            <person name="Tanikawa M."/>
            <person name="Yamazaki M."/>
            <person name="Ninomiya K."/>
            <person name="Ishibashi T."/>
            <person name="Yamashita H."/>
            <person name="Murakawa K."/>
            <person name="Fujimori K."/>
            <person name="Tanai H."/>
            <person name="Kimata M."/>
            <person name="Watanabe M."/>
            <person name="Hiraoka S."/>
            <person name="Chiba Y."/>
            <person name="Ishida S."/>
            <person name="Ono Y."/>
            <person name="Takiguchi S."/>
            <person name="Watanabe S."/>
            <person name="Yosida M."/>
            <person name="Hotuta T."/>
            <person name="Kusano J."/>
            <person name="Kanehori K."/>
            <person name="Takahashi-Fujii A."/>
            <person name="Hara H."/>
            <person name="Tanase T.-O."/>
            <person name="Nomura Y."/>
            <person name="Togiya S."/>
            <person name="Komai F."/>
            <person name="Hara R."/>
            <person name="Takeuchi K."/>
            <person name="Arita M."/>
            <person name="Imose N."/>
            <person name="Musashino K."/>
            <person name="Yuuki H."/>
            <person name="Oshima A."/>
            <person name="Sasaki N."/>
            <person name="Aotsuka S."/>
            <person name="Yoshikawa Y."/>
            <person name="Matsunawa H."/>
            <person name="Ichihara T."/>
            <person name="Shiohata N."/>
            <person name="Sano S."/>
            <person name="Moriya S."/>
            <person name="Momiyama H."/>
            <person name="Satoh N."/>
            <person name="Takami S."/>
            <person name="Terashima Y."/>
            <person name="Suzuki O."/>
            <person name="Nakagawa S."/>
            <person name="Senoh A."/>
            <person name="Mizoguchi H."/>
            <person name="Goto Y."/>
            <person name="Shimizu F."/>
            <person name="Wakebe H."/>
            <person name="Hishigaki H."/>
            <person name="Watanabe T."/>
            <person name="Sugiyama A."/>
            <person name="Takemoto M."/>
            <person name="Kawakami B."/>
            <person name="Yamazaki M."/>
            <person name="Watanabe K."/>
            <person name="Kumagai A."/>
            <person name="Itakura S."/>
            <person name="Fukuzumi Y."/>
            <person name="Fujimori Y."/>
            <person name="Komiyama M."/>
            <person name="Tashiro H."/>
            <person name="Tanigami A."/>
            <person name="Fujiwara T."/>
            <person name="Ono T."/>
            <person name="Yamada K."/>
            <person name="Fujii Y."/>
            <person name="Ozaki K."/>
            <person name="Hirao M."/>
            <person name="Ohmori Y."/>
            <person name="Kawabata A."/>
            <person name="Hikiji T."/>
            <person name="Kobatake N."/>
            <person name="Inagaki H."/>
            <person name="Ikema Y."/>
            <person name="Okamoto S."/>
            <person name="Okitani R."/>
            <person name="Kawakami T."/>
            <person name="Noguchi S."/>
            <person name="Itoh T."/>
            <person name="Shigeta K."/>
            <person name="Senba T."/>
            <person name="Matsumura K."/>
            <person name="Nakajima Y."/>
            <person name="Mizuno T."/>
            <person name="Morinaga M."/>
            <person name="Sasaki M."/>
            <person name="Togashi T."/>
            <person name="Oyama M."/>
            <person name="Hata H."/>
            <person name="Watanabe M."/>
            <person name="Komatsu T."/>
            <person name="Mizushima-Sugano J."/>
            <person name="Satoh T."/>
            <person name="Shirai Y."/>
            <person name="Takahashi Y."/>
            <person name="Nakagawa K."/>
            <person name="Okumura K."/>
            <person name="Nagase T."/>
            <person name="Nomura N."/>
            <person name="Kikuchi H."/>
            <person name="Masuho Y."/>
            <person name="Yamashita R."/>
            <person name="Nakai K."/>
            <person name="Yada T."/>
            <person name="Nakamura Y."/>
            <person name="Ohara O."/>
            <person name="Isogai T."/>
            <person name="Sugano S."/>
        </authorList>
    </citation>
    <scope>NUCLEOTIDE SEQUENCE [LARGE SCALE MRNA] (ISOFORM 2)</scope>
    <source>
        <tissue>Small intestine</tissue>
    </source>
</reference>
<reference key="4">
    <citation type="journal article" date="2005" name="Nature">
        <title>Generation and annotation of the DNA sequences of human chromosomes 2 and 4.</title>
        <authorList>
            <person name="Hillier L.W."/>
            <person name="Graves T.A."/>
            <person name="Fulton R.S."/>
            <person name="Fulton L.A."/>
            <person name="Pepin K.H."/>
            <person name="Minx P."/>
            <person name="Wagner-McPherson C."/>
            <person name="Layman D."/>
            <person name="Wylie K."/>
            <person name="Sekhon M."/>
            <person name="Becker M.C."/>
            <person name="Fewell G.A."/>
            <person name="Delehaunty K.D."/>
            <person name="Miner T.L."/>
            <person name="Nash W.E."/>
            <person name="Kremitzki C."/>
            <person name="Oddy L."/>
            <person name="Du H."/>
            <person name="Sun H."/>
            <person name="Bradshaw-Cordum H."/>
            <person name="Ali J."/>
            <person name="Carter J."/>
            <person name="Cordes M."/>
            <person name="Harris A."/>
            <person name="Isak A."/>
            <person name="van Brunt A."/>
            <person name="Nguyen C."/>
            <person name="Du F."/>
            <person name="Courtney L."/>
            <person name="Kalicki J."/>
            <person name="Ozersky P."/>
            <person name="Abbott S."/>
            <person name="Armstrong J."/>
            <person name="Belter E.A."/>
            <person name="Caruso L."/>
            <person name="Cedroni M."/>
            <person name="Cotton M."/>
            <person name="Davidson T."/>
            <person name="Desai A."/>
            <person name="Elliott G."/>
            <person name="Erb T."/>
            <person name="Fronick C."/>
            <person name="Gaige T."/>
            <person name="Haakenson W."/>
            <person name="Haglund K."/>
            <person name="Holmes A."/>
            <person name="Harkins R."/>
            <person name="Kim K."/>
            <person name="Kruchowski S.S."/>
            <person name="Strong C.M."/>
            <person name="Grewal N."/>
            <person name="Goyea E."/>
            <person name="Hou S."/>
            <person name="Levy A."/>
            <person name="Martinka S."/>
            <person name="Mead K."/>
            <person name="McLellan M.D."/>
            <person name="Meyer R."/>
            <person name="Randall-Maher J."/>
            <person name="Tomlinson C."/>
            <person name="Dauphin-Kohlberg S."/>
            <person name="Kozlowicz-Reilly A."/>
            <person name="Shah N."/>
            <person name="Swearengen-Shahid S."/>
            <person name="Snider J."/>
            <person name="Strong J.T."/>
            <person name="Thompson J."/>
            <person name="Yoakum M."/>
            <person name="Leonard S."/>
            <person name="Pearman C."/>
            <person name="Trani L."/>
            <person name="Radionenko M."/>
            <person name="Waligorski J.E."/>
            <person name="Wang C."/>
            <person name="Rock S.M."/>
            <person name="Tin-Wollam A.-M."/>
            <person name="Maupin R."/>
            <person name="Latreille P."/>
            <person name="Wendl M.C."/>
            <person name="Yang S.-P."/>
            <person name="Pohl C."/>
            <person name="Wallis J.W."/>
            <person name="Spieth J."/>
            <person name="Bieri T.A."/>
            <person name="Berkowicz N."/>
            <person name="Nelson J.O."/>
            <person name="Osborne J."/>
            <person name="Ding L."/>
            <person name="Meyer R."/>
            <person name="Sabo A."/>
            <person name="Shotland Y."/>
            <person name="Sinha P."/>
            <person name="Wohldmann P.E."/>
            <person name="Cook L.L."/>
            <person name="Hickenbotham M.T."/>
            <person name="Eldred J."/>
            <person name="Williams D."/>
            <person name="Jones T.A."/>
            <person name="She X."/>
            <person name="Ciccarelli F.D."/>
            <person name="Izaurralde E."/>
            <person name="Taylor J."/>
            <person name="Schmutz J."/>
            <person name="Myers R.M."/>
            <person name="Cox D.R."/>
            <person name="Huang X."/>
            <person name="McPherson J.D."/>
            <person name="Mardis E.R."/>
            <person name="Clifton S.W."/>
            <person name="Warren W.C."/>
            <person name="Chinwalla A.T."/>
            <person name="Eddy S.R."/>
            <person name="Marra M.A."/>
            <person name="Ovcharenko I."/>
            <person name="Furey T.S."/>
            <person name="Miller W."/>
            <person name="Eichler E.E."/>
            <person name="Bork P."/>
            <person name="Suyama M."/>
            <person name="Torrents D."/>
            <person name="Waterston R.H."/>
            <person name="Wilson R.K."/>
        </authorList>
    </citation>
    <scope>NUCLEOTIDE SEQUENCE [LARGE SCALE GENOMIC DNA]</scope>
</reference>
<reference key="5">
    <citation type="journal article" date="2004" name="Genome Res.">
        <title>The status, quality, and expansion of the NIH full-length cDNA project: the Mammalian Gene Collection (MGC).</title>
        <authorList>
            <consortium name="The MGC Project Team"/>
        </authorList>
    </citation>
    <scope>NUCLEOTIDE SEQUENCE [LARGE SCALE MRNA] (ISOFORM 1)</scope>
    <source>
        <tissue>Lung</tissue>
    </source>
</reference>
<reference key="6">
    <citation type="journal article" date="2007" name="FEBS Lett.">
        <title>Identification and characterization of human ribokinase and comparison of its properties with E. coli ribokinase and human adenosine kinase.</title>
        <authorList>
            <person name="Park J."/>
            <person name="van Koeverden P."/>
            <person name="Singh B."/>
            <person name="Gupta R.S."/>
        </authorList>
    </citation>
    <scope>FUNCTION</scope>
    <scope>CATALYTIC ACTIVITY</scope>
    <scope>BIOPHYSICOCHEMICAL PROPERTIES</scope>
    <scope>ACTIVITY REGULATION</scope>
</reference>
<reference key="7">
    <citation type="submission" date="2006-01" db="PDB data bank">
        <title>Crystal structure of human ribokinase.</title>
        <authorList>
            <consortium name="Structural genomics consortium (SGC)"/>
        </authorList>
    </citation>
    <scope>X-RAY CRYSTALLOGRAPHY (2.1 ANGSTROMS) OF 11-322 IN COMPLEX WITH ADP; SODIUM AND MAGNESIUM</scope>
</reference>
<protein>
    <recommendedName>
        <fullName evidence="3 7">Ribokinase</fullName>
        <shortName evidence="3 7">RK</shortName>
        <ecNumber evidence="3 4">2.7.1.15</ecNumber>
    </recommendedName>
</protein>
<comment type="function">
    <text evidence="3 4">Catalyzes the phosphorylation of ribose at O-5 in a reaction requiring ATP and magnesium. The resulting D-ribose-5-phosphate can then be used either for sythesis of nucleotides, histidine, and tryptophan, or as a component of the pentose phosphate pathway.</text>
</comment>
<comment type="catalytic activity">
    <reaction evidence="3 4">
        <text>D-ribose + ATP = D-ribose 5-phosphate + ADP + H(+)</text>
        <dbReference type="Rhea" id="RHEA:13697"/>
        <dbReference type="ChEBI" id="CHEBI:15378"/>
        <dbReference type="ChEBI" id="CHEBI:30616"/>
        <dbReference type="ChEBI" id="CHEBI:47013"/>
        <dbReference type="ChEBI" id="CHEBI:78346"/>
        <dbReference type="ChEBI" id="CHEBI:456216"/>
        <dbReference type="EC" id="2.7.1.15"/>
    </reaction>
</comment>
<comment type="cofactor">
    <cofactor evidence="3">
        <name>Mg(2+)</name>
        <dbReference type="ChEBI" id="CHEBI:18420"/>
    </cofactor>
    <text evidence="3">Requires a divalent cation, most likely magnesium in vivo, as an electrophilic catalyst to aid phosphoryl group transfer. It is the chelate of the metal and the nucleotide that is the actual substrate.</text>
</comment>
<comment type="activity regulation">
    <text evidence="3 4">Activated by a monovalent cation that binds near, but not in, the active site. The most likely occupant of the site in vivo is potassium. Ion binding induces a conformational change that may alter substrate affinity (By similarity). Competitively inhibited by phosphonoacetic acid, etidronate, 2-carboxethylphosphonic acid, N-(phosphonomethyl)glycine, N-(phosphonomethyl)iminodiacetic acid and clodronate (PubMed:17585908).</text>
</comment>
<comment type="biophysicochemical properties">
    <kinetics>
        <KM evidence="4">2.17 mM for ribose (in the presence of 10 mM inorganic phosphate)</KM>
        <KM evidence="4">3.39 mM for ribose (in the presence of 5 mM inorganic phosphate)</KM>
        <KM evidence="4">6.62 mM for ribose (in the presence of 2 mM inorganic phosphate)</KM>
        <KM evidence="4">30.43 mM for ribose (in the presence of 1 mM inorganic phosphate)</KM>
        <KM evidence="4">0.07 mM for ATP (in the presence of 5 mM inorganic phosphate)</KM>
        <KM evidence="4">0.08 mM for ATP (in the presence of 2 mM inorganic phosphate)</KM>
        <KM evidence="4">0.1 mM for ATP (in the presence of 1 mM inorganic phosphate)</KM>
    </kinetics>
</comment>
<comment type="pathway">
    <text evidence="3">Carbohydrate metabolism; D-ribose degradation; D-ribose 5-phosphate from beta-D-ribopyranose: step 2/2.</text>
</comment>
<comment type="subunit">
    <text evidence="1 3">Homodimer.</text>
</comment>
<comment type="interaction">
    <interactant intactId="EBI-10982959">
        <id>Q9H477</id>
    </interactant>
    <interactant intactId="EBI-717666">
        <id>Q96AP0</id>
        <label>ACD</label>
    </interactant>
    <organismsDiffer>false</organismsDiffer>
    <experiments>2</experiments>
</comment>
<comment type="interaction">
    <interactant intactId="EBI-10982959">
        <id>Q9H477</id>
    </interactant>
    <interactant intactId="EBI-712251">
        <id>P46459</id>
        <label>NSF</label>
    </interactant>
    <organismsDiffer>false</organismsDiffer>
    <experiments>2</experiments>
</comment>
<comment type="interaction">
    <interactant intactId="EBI-10982959">
        <id>Q9H477</id>
    </interactant>
    <interactant intactId="EBI-10982959">
        <id>Q9H477</id>
        <label>RBKS</label>
    </interactant>
    <organismsDiffer>false</organismsDiffer>
    <experiments>4</experiments>
</comment>
<comment type="subcellular location">
    <subcellularLocation>
        <location evidence="2 3">Cytoplasm</location>
    </subcellularLocation>
    <subcellularLocation>
        <location evidence="2 3">Nucleus</location>
    </subcellularLocation>
</comment>
<comment type="alternative products">
    <event type="alternative splicing"/>
    <isoform>
        <id>Q9H477-1</id>
        <name>1</name>
        <sequence type="displayed"/>
    </isoform>
    <isoform>
        <id>Q9H477-2</id>
        <name>2</name>
        <sequence type="described" ref="VSP_054380"/>
    </isoform>
</comment>
<comment type="similarity">
    <text evidence="3">Belongs to the carbohydrate kinase PfkB family. Ribokinase subfamily.</text>
</comment>
<feature type="chain" id="PRO_0000080092" description="Ribokinase">
    <location>
        <begin position="1"/>
        <end position="322"/>
    </location>
</feature>
<feature type="active site" description="Proton acceptor" evidence="1 3">
    <location>
        <position position="269"/>
    </location>
</feature>
<feature type="binding site" evidence="1 3">
    <location>
        <begin position="25"/>
        <end position="27"/>
    </location>
    <ligand>
        <name>substrate</name>
    </ligand>
</feature>
<feature type="binding site" evidence="1 3">
    <location>
        <begin position="53"/>
        <end position="57"/>
    </location>
    <ligand>
        <name>substrate</name>
    </ligand>
</feature>
<feature type="binding site" evidence="1 3">
    <location>
        <position position="154"/>
    </location>
    <ligand>
        <name>substrate</name>
    </ligand>
</feature>
<feature type="binding site" evidence="3 5">
    <location>
        <position position="199"/>
    </location>
    <ligand>
        <name>ATP</name>
        <dbReference type="ChEBI" id="CHEBI:30616"/>
    </ligand>
</feature>
<feature type="binding site" evidence="3 5">
    <location>
        <begin position="235"/>
        <end position="240"/>
    </location>
    <ligand>
        <name>ATP</name>
        <dbReference type="ChEBI" id="CHEBI:30616"/>
    </ligand>
</feature>
<feature type="binding site" evidence="3 5">
    <location>
        <position position="256"/>
    </location>
    <ligand>
        <name>ATP</name>
        <dbReference type="ChEBI" id="CHEBI:30616"/>
    </ligand>
</feature>
<feature type="binding site" evidence="3 9">
    <location>
        <position position="263"/>
    </location>
    <ligand>
        <name>K(+)</name>
        <dbReference type="ChEBI" id="CHEBI:29103"/>
    </ligand>
</feature>
<feature type="binding site" evidence="1 3">
    <location>
        <position position="265"/>
    </location>
    <ligand>
        <name>K(+)</name>
        <dbReference type="ChEBI" id="CHEBI:29103"/>
    </ligand>
</feature>
<feature type="binding site" evidence="3 5">
    <location>
        <begin position="268"/>
        <end position="269"/>
    </location>
    <ligand>
        <name>ATP</name>
        <dbReference type="ChEBI" id="CHEBI:30616"/>
    </ligand>
</feature>
<feature type="binding site" evidence="1 3">
    <location>
        <position position="269"/>
    </location>
    <ligand>
        <name>substrate</name>
    </ligand>
</feature>
<feature type="binding site" evidence="3 5">
    <location>
        <position position="295"/>
    </location>
    <ligand>
        <name>ATP</name>
        <dbReference type="ChEBI" id="CHEBI:30616"/>
    </ligand>
</feature>
<feature type="binding site" evidence="3 9">
    <location>
        <position position="301"/>
    </location>
    <ligand>
        <name>K(+)</name>
        <dbReference type="ChEBI" id="CHEBI:29103"/>
    </ligand>
</feature>
<feature type="binding site" evidence="3 9">
    <location>
        <position position="304"/>
    </location>
    <ligand>
        <name>K(+)</name>
        <dbReference type="ChEBI" id="CHEBI:29103"/>
    </ligand>
</feature>
<feature type="binding site" evidence="1 3">
    <location>
        <position position="306"/>
    </location>
    <ligand>
        <name>K(+)</name>
        <dbReference type="ChEBI" id="CHEBI:29103"/>
    </ligand>
</feature>
<feature type="binding site" evidence="3 9">
    <location>
        <position position="310"/>
    </location>
    <ligand>
        <name>K(+)</name>
        <dbReference type="ChEBI" id="CHEBI:29103"/>
    </ligand>
</feature>
<feature type="splice variant" id="VSP_054380" description="In isoform 2." evidence="6">
    <original>GAGDSFVGALAFYLAYYPNLSLEDMLNRSNFIAAVSVQAAGTQSSYPYKKDLPLTLF</original>
    <variation>CRPGSRPKSEAASVKKQKHYK</variation>
    <location>
        <begin position="266"/>
        <end position="322"/>
    </location>
</feature>
<feature type="sequence conflict" description="In Ref. 2; AAT64917." evidence="8" ref="2">
    <original>T</original>
    <variation>A</variation>
    <location>
        <position position="101"/>
    </location>
</feature>
<feature type="strand" evidence="10">
    <location>
        <begin position="17"/>
        <end position="21"/>
    </location>
</feature>
<feature type="strand" evidence="10">
    <location>
        <begin position="25"/>
        <end position="31"/>
    </location>
</feature>
<feature type="strand" evidence="10">
    <location>
        <begin position="41"/>
        <end position="43"/>
    </location>
</feature>
<feature type="strand" evidence="10">
    <location>
        <begin position="45"/>
        <end position="52"/>
    </location>
</feature>
<feature type="helix" evidence="10">
    <location>
        <begin position="54"/>
        <end position="64"/>
    </location>
</feature>
<feature type="strand" evidence="10">
    <location>
        <begin position="69"/>
        <end position="78"/>
    </location>
</feature>
<feature type="helix" evidence="10">
    <location>
        <begin position="79"/>
        <end position="90"/>
    </location>
</feature>
<feature type="strand" evidence="10">
    <location>
        <begin position="98"/>
        <end position="101"/>
    </location>
</feature>
<feature type="strand" evidence="10">
    <location>
        <begin position="108"/>
        <end position="113"/>
    </location>
</feature>
<feature type="strand" evidence="10">
    <location>
        <begin position="119"/>
        <end position="124"/>
    </location>
</feature>
<feature type="helix" evidence="10">
    <location>
        <begin position="126"/>
        <end position="130"/>
    </location>
</feature>
<feature type="helix" evidence="10">
    <location>
        <begin position="133"/>
        <end position="138"/>
    </location>
</feature>
<feature type="helix" evidence="10">
    <location>
        <begin position="140"/>
        <end position="145"/>
    </location>
</feature>
<feature type="strand" evidence="10">
    <location>
        <begin position="147"/>
        <end position="151"/>
    </location>
</feature>
<feature type="strand" evidence="10">
    <location>
        <begin position="153"/>
        <end position="155"/>
    </location>
</feature>
<feature type="helix" evidence="10">
    <location>
        <begin position="157"/>
        <end position="169"/>
    </location>
</feature>
<feature type="strand" evidence="10">
    <location>
        <begin position="173"/>
        <end position="176"/>
    </location>
</feature>
<feature type="helix" evidence="10">
    <location>
        <begin position="188"/>
        <end position="191"/>
    </location>
</feature>
<feature type="strand" evidence="10">
    <location>
        <begin position="194"/>
        <end position="199"/>
    </location>
</feature>
<feature type="helix" evidence="10">
    <location>
        <begin position="200"/>
        <end position="207"/>
    </location>
</feature>
<feature type="helix" evidence="10">
    <location>
        <begin position="214"/>
        <end position="225"/>
    </location>
</feature>
<feature type="turn" evidence="10">
    <location>
        <begin position="226"/>
        <end position="228"/>
    </location>
</feature>
<feature type="strand" evidence="10">
    <location>
        <begin position="230"/>
        <end position="235"/>
    </location>
</feature>
<feature type="helix" evidence="10">
    <location>
        <begin position="237"/>
        <end position="239"/>
    </location>
</feature>
<feature type="strand" evidence="10">
    <location>
        <begin position="241"/>
        <end position="247"/>
    </location>
</feature>
<feature type="strand" evidence="10">
    <location>
        <begin position="252"/>
        <end position="254"/>
    </location>
</feature>
<feature type="helix" evidence="10">
    <location>
        <begin position="267"/>
        <end position="281"/>
    </location>
</feature>
<feature type="helix" evidence="10">
    <location>
        <begin position="287"/>
        <end position="301"/>
    </location>
</feature>
<feature type="strand" evidence="10">
    <location>
        <begin position="304"/>
        <end position="306"/>
    </location>
</feature>
<feature type="helix" evidence="10">
    <location>
        <begin position="307"/>
        <end position="310"/>
    </location>
</feature>
<feature type="helix" evidence="10">
    <location>
        <begin position="314"/>
        <end position="316"/>
    </location>
</feature>
<feature type="helix" evidence="10">
    <location>
        <begin position="319"/>
        <end position="322"/>
    </location>
</feature>
<keyword id="KW-0002">3D-structure</keyword>
<keyword id="KW-0025">Alternative splicing</keyword>
<keyword id="KW-0067">ATP-binding</keyword>
<keyword id="KW-0119">Carbohydrate metabolism</keyword>
<keyword id="KW-0963">Cytoplasm</keyword>
<keyword id="KW-0418">Kinase</keyword>
<keyword id="KW-0460">Magnesium</keyword>
<keyword id="KW-0479">Metal-binding</keyword>
<keyword id="KW-0547">Nucleotide-binding</keyword>
<keyword id="KW-0539">Nucleus</keyword>
<keyword id="KW-0630">Potassium</keyword>
<keyword id="KW-1267">Proteomics identification</keyword>
<keyword id="KW-1185">Reference proteome</keyword>
<keyword id="KW-0808">Transferase</keyword>
<dbReference type="EC" id="2.7.1.15" evidence="3 4"/>
<dbReference type="EMBL" id="AJ404857">
    <property type="protein sequence ID" value="CAC12877.1"/>
    <property type="molecule type" value="mRNA"/>
</dbReference>
<dbReference type="EMBL" id="AY643715">
    <property type="protein sequence ID" value="AAT64917.1"/>
    <property type="molecule type" value="mRNA"/>
</dbReference>
<dbReference type="EMBL" id="AK300989">
    <property type="protein sequence ID" value="BAG62608.1"/>
    <property type="molecule type" value="mRNA"/>
</dbReference>
<dbReference type="EMBL" id="AC021171">
    <property type="status" value="NOT_ANNOTATED_CDS"/>
    <property type="molecule type" value="Genomic_DNA"/>
</dbReference>
<dbReference type="EMBL" id="AC110084">
    <property type="status" value="NOT_ANNOTATED_CDS"/>
    <property type="molecule type" value="Genomic_DNA"/>
</dbReference>
<dbReference type="EMBL" id="BC017425">
    <property type="protein sequence ID" value="AAH17425.1"/>
    <property type="molecule type" value="mRNA"/>
</dbReference>
<dbReference type="CCDS" id="CCDS1762.1">
    <molecule id="Q9H477-1"/>
</dbReference>
<dbReference type="RefSeq" id="NP_001274509.1">
    <property type="nucleotide sequence ID" value="NM_001287580.1"/>
</dbReference>
<dbReference type="RefSeq" id="NP_071411.1">
    <molecule id="Q9H477-1"/>
    <property type="nucleotide sequence ID" value="NM_022128.3"/>
</dbReference>
<dbReference type="PDB" id="2FV7">
    <property type="method" value="X-ray"/>
    <property type="resolution" value="2.10 A"/>
    <property type="chains" value="A/B=11-322"/>
</dbReference>
<dbReference type="PDB" id="5BYC">
    <property type="method" value="X-ray"/>
    <property type="resolution" value="1.95 A"/>
    <property type="chains" value="A/B=1-322"/>
</dbReference>
<dbReference type="PDB" id="5BYD">
    <property type="method" value="X-ray"/>
    <property type="resolution" value="2.10 A"/>
    <property type="chains" value="A/B=1-322"/>
</dbReference>
<dbReference type="PDB" id="5BYE">
    <property type="method" value="X-ray"/>
    <property type="resolution" value="1.75 A"/>
    <property type="chains" value="A/B=1-322"/>
</dbReference>
<dbReference type="PDB" id="5BYF">
    <property type="method" value="X-ray"/>
    <property type="resolution" value="2.00 A"/>
    <property type="chains" value="A/B=1-322"/>
</dbReference>
<dbReference type="PDB" id="5C3Y">
    <property type="method" value="X-ray"/>
    <property type="resolution" value="2.60 A"/>
    <property type="chains" value="A/B/C/D/E/F/G/H/I/J/K/L=1-322"/>
</dbReference>
<dbReference type="PDB" id="5C3Z">
    <property type="method" value="X-ray"/>
    <property type="resolution" value="1.90 A"/>
    <property type="chains" value="A/B=1-322"/>
</dbReference>
<dbReference type="PDB" id="5C40">
    <property type="method" value="X-ray"/>
    <property type="resolution" value="1.50 A"/>
    <property type="chains" value="A/B=1-322"/>
</dbReference>
<dbReference type="PDB" id="5C41">
    <property type="method" value="X-ray"/>
    <property type="resolution" value="1.95 A"/>
    <property type="chains" value="A/B/C/D=1-322"/>
</dbReference>
<dbReference type="PDB" id="6WJZ">
    <property type="method" value="X-ray"/>
    <property type="resolution" value="1.80 A"/>
    <property type="chains" value="A/B=14-322"/>
</dbReference>
<dbReference type="PDB" id="6WK0">
    <property type="method" value="X-ray"/>
    <property type="resolution" value="2.00 A"/>
    <property type="chains" value="A/B/C/D=14-322"/>
</dbReference>
<dbReference type="PDBsum" id="2FV7"/>
<dbReference type="PDBsum" id="5BYC"/>
<dbReference type="PDBsum" id="5BYD"/>
<dbReference type="PDBsum" id="5BYE"/>
<dbReference type="PDBsum" id="5BYF"/>
<dbReference type="PDBsum" id="5C3Y"/>
<dbReference type="PDBsum" id="5C3Z"/>
<dbReference type="PDBsum" id="5C40"/>
<dbReference type="PDBsum" id="5C41"/>
<dbReference type="PDBsum" id="6WJZ"/>
<dbReference type="PDBsum" id="6WK0"/>
<dbReference type="SMR" id="Q9H477"/>
<dbReference type="BioGRID" id="122046">
    <property type="interactions" value="23"/>
</dbReference>
<dbReference type="FunCoup" id="Q9H477">
    <property type="interactions" value="735"/>
</dbReference>
<dbReference type="IntAct" id="Q9H477">
    <property type="interactions" value="13"/>
</dbReference>
<dbReference type="MINT" id="Q9H477"/>
<dbReference type="STRING" id="9606.ENSP00000306817"/>
<dbReference type="GlyGen" id="Q9H477">
    <property type="glycosylation" value="1 site, 1 O-linked glycan (1 site)"/>
</dbReference>
<dbReference type="iPTMnet" id="Q9H477"/>
<dbReference type="PhosphoSitePlus" id="Q9H477"/>
<dbReference type="BioMuta" id="RBKS"/>
<dbReference type="DMDM" id="20139730"/>
<dbReference type="jPOST" id="Q9H477"/>
<dbReference type="MassIVE" id="Q9H477"/>
<dbReference type="PaxDb" id="9606-ENSP00000306817"/>
<dbReference type="PeptideAtlas" id="Q9H477"/>
<dbReference type="ProteomicsDB" id="5255"/>
<dbReference type="ProteomicsDB" id="80790">
    <molecule id="Q9H477-1"/>
</dbReference>
<dbReference type="Pumba" id="Q9H477"/>
<dbReference type="Antibodypedia" id="13898">
    <property type="antibodies" value="136 antibodies from 22 providers"/>
</dbReference>
<dbReference type="DNASU" id="64080"/>
<dbReference type="Ensembl" id="ENST00000302188.8">
    <molecule id="Q9H477-1"/>
    <property type="protein sequence ID" value="ENSP00000306817.3"/>
    <property type="gene ID" value="ENSG00000171174.15"/>
</dbReference>
<dbReference type="GeneID" id="64080"/>
<dbReference type="KEGG" id="hsa:64080"/>
<dbReference type="MANE-Select" id="ENST00000302188.8">
    <property type="protein sequence ID" value="ENSP00000306817.3"/>
    <property type="RefSeq nucleotide sequence ID" value="NM_022128.3"/>
    <property type="RefSeq protein sequence ID" value="NP_071411.1"/>
</dbReference>
<dbReference type="UCSC" id="uc002rlo.3">
    <molecule id="Q9H477-1"/>
    <property type="organism name" value="human"/>
</dbReference>
<dbReference type="AGR" id="HGNC:30325"/>
<dbReference type="CTD" id="64080"/>
<dbReference type="DisGeNET" id="64080"/>
<dbReference type="GeneCards" id="RBKS"/>
<dbReference type="HGNC" id="HGNC:30325">
    <property type="gene designation" value="RBKS"/>
</dbReference>
<dbReference type="HPA" id="ENSG00000171174">
    <property type="expression patterns" value="Tissue enhanced (liver)"/>
</dbReference>
<dbReference type="MIM" id="611132">
    <property type="type" value="gene"/>
</dbReference>
<dbReference type="neXtProt" id="NX_Q9H477"/>
<dbReference type="OpenTargets" id="ENSG00000171174"/>
<dbReference type="PharmGKB" id="PA134951602"/>
<dbReference type="VEuPathDB" id="HostDB:ENSG00000171174"/>
<dbReference type="eggNOG" id="KOG2855">
    <property type="taxonomic scope" value="Eukaryota"/>
</dbReference>
<dbReference type="GeneTree" id="ENSGT00390000005743"/>
<dbReference type="HOGENOM" id="CLU_027634_2_3_1"/>
<dbReference type="InParanoid" id="Q9H477"/>
<dbReference type="OMA" id="DIVLIQQ"/>
<dbReference type="OrthoDB" id="415590at2759"/>
<dbReference type="PAN-GO" id="Q9H477">
    <property type="GO annotations" value="0 GO annotations based on evolutionary models"/>
</dbReference>
<dbReference type="PhylomeDB" id="Q9H477"/>
<dbReference type="TreeFam" id="TF105770"/>
<dbReference type="BRENDA" id="2.7.1.15">
    <property type="organism ID" value="2681"/>
</dbReference>
<dbReference type="PathwayCommons" id="Q9H477"/>
<dbReference type="Reactome" id="R-HSA-71336">
    <property type="pathway name" value="Pentose phosphate pathway"/>
</dbReference>
<dbReference type="SABIO-RK" id="Q9H477"/>
<dbReference type="SignaLink" id="Q9H477"/>
<dbReference type="SIGNOR" id="Q9H477"/>
<dbReference type="UniPathway" id="UPA00916">
    <property type="reaction ID" value="UER00889"/>
</dbReference>
<dbReference type="BioGRID-ORCS" id="64080">
    <property type="hits" value="14 hits in 1147 CRISPR screens"/>
</dbReference>
<dbReference type="ChiTaRS" id="RBKS">
    <property type="organism name" value="human"/>
</dbReference>
<dbReference type="EvolutionaryTrace" id="Q9H477"/>
<dbReference type="GenomeRNAi" id="64080"/>
<dbReference type="Pharos" id="Q9H477">
    <property type="development level" value="Tbio"/>
</dbReference>
<dbReference type="PRO" id="PR:Q9H477"/>
<dbReference type="Proteomes" id="UP000005640">
    <property type="component" value="Chromosome 2"/>
</dbReference>
<dbReference type="RNAct" id="Q9H477">
    <property type="molecule type" value="protein"/>
</dbReference>
<dbReference type="Bgee" id="ENSG00000171174">
    <property type="expression patterns" value="Expressed in jejunal mucosa and 166 other cell types or tissues"/>
</dbReference>
<dbReference type="ExpressionAtlas" id="Q9H477">
    <property type="expression patterns" value="baseline and differential"/>
</dbReference>
<dbReference type="GO" id="GO:0005829">
    <property type="term" value="C:cytosol"/>
    <property type="evidence" value="ECO:0000318"/>
    <property type="project" value="GO_Central"/>
</dbReference>
<dbReference type="GO" id="GO:0005634">
    <property type="term" value="C:nucleus"/>
    <property type="evidence" value="ECO:0007669"/>
    <property type="project" value="UniProtKB-SubCell"/>
</dbReference>
<dbReference type="GO" id="GO:0005524">
    <property type="term" value="F:ATP binding"/>
    <property type="evidence" value="ECO:0007669"/>
    <property type="project" value="UniProtKB-UniRule"/>
</dbReference>
<dbReference type="GO" id="GO:0042802">
    <property type="term" value="F:identical protein binding"/>
    <property type="evidence" value="ECO:0000353"/>
    <property type="project" value="IntAct"/>
</dbReference>
<dbReference type="GO" id="GO:0046872">
    <property type="term" value="F:metal ion binding"/>
    <property type="evidence" value="ECO:0007669"/>
    <property type="project" value="UniProtKB-KW"/>
</dbReference>
<dbReference type="GO" id="GO:0004747">
    <property type="term" value="F:ribokinase activity"/>
    <property type="evidence" value="ECO:0000304"/>
    <property type="project" value="Reactome"/>
</dbReference>
<dbReference type="GO" id="GO:0019303">
    <property type="term" value="P:D-ribose catabolic process"/>
    <property type="evidence" value="ECO:0007669"/>
    <property type="project" value="UniProtKB-UniRule"/>
</dbReference>
<dbReference type="GO" id="GO:0006098">
    <property type="term" value="P:pentose-phosphate shunt"/>
    <property type="evidence" value="ECO:0000304"/>
    <property type="project" value="Reactome"/>
</dbReference>
<dbReference type="CDD" id="cd01174">
    <property type="entry name" value="ribokinase"/>
    <property type="match status" value="1"/>
</dbReference>
<dbReference type="FunFam" id="3.40.1190.20:FF:000022">
    <property type="entry name" value="Ribokinase"/>
    <property type="match status" value="1"/>
</dbReference>
<dbReference type="Gene3D" id="3.40.1190.20">
    <property type="match status" value="1"/>
</dbReference>
<dbReference type="HAMAP" id="MF_01987">
    <property type="entry name" value="Ribokinase"/>
    <property type="match status" value="1"/>
</dbReference>
<dbReference type="InterPro" id="IPR002173">
    <property type="entry name" value="Carboh/pur_kinase_PfkB_CS"/>
</dbReference>
<dbReference type="InterPro" id="IPR011611">
    <property type="entry name" value="PfkB_dom"/>
</dbReference>
<dbReference type="InterPro" id="IPR002139">
    <property type="entry name" value="Ribo/fructo_kinase"/>
</dbReference>
<dbReference type="InterPro" id="IPR011877">
    <property type="entry name" value="Ribokinase"/>
</dbReference>
<dbReference type="InterPro" id="IPR029056">
    <property type="entry name" value="Ribokinase-like"/>
</dbReference>
<dbReference type="NCBIfam" id="TIGR02152">
    <property type="entry name" value="D_ribokin_bact"/>
    <property type="match status" value="1"/>
</dbReference>
<dbReference type="PANTHER" id="PTHR10584:SF166">
    <property type="entry name" value="RIBOKINASE"/>
    <property type="match status" value="1"/>
</dbReference>
<dbReference type="PANTHER" id="PTHR10584">
    <property type="entry name" value="SUGAR KINASE"/>
    <property type="match status" value="1"/>
</dbReference>
<dbReference type="Pfam" id="PF00294">
    <property type="entry name" value="PfkB"/>
    <property type="match status" value="1"/>
</dbReference>
<dbReference type="PRINTS" id="PR00990">
    <property type="entry name" value="RIBOKINASE"/>
</dbReference>
<dbReference type="SUPFAM" id="SSF53613">
    <property type="entry name" value="Ribokinase-like"/>
    <property type="match status" value="1"/>
</dbReference>
<dbReference type="PROSITE" id="PS00584">
    <property type="entry name" value="PFKB_KINASES_2"/>
    <property type="match status" value="1"/>
</dbReference>
<evidence type="ECO:0000250" key="1">
    <source>
        <dbReference type="UniProtKB" id="P0A9J6"/>
    </source>
</evidence>
<evidence type="ECO:0000250" key="2">
    <source>
        <dbReference type="UniProtKB" id="P25332"/>
    </source>
</evidence>
<evidence type="ECO:0000255" key="3">
    <source>
        <dbReference type="HAMAP-Rule" id="MF_03215"/>
    </source>
</evidence>
<evidence type="ECO:0000269" key="4">
    <source>
    </source>
</evidence>
<evidence type="ECO:0000269" key="5">
    <source ref="7"/>
</evidence>
<evidence type="ECO:0000303" key="6">
    <source>
    </source>
</evidence>
<evidence type="ECO:0000303" key="7">
    <source>
    </source>
</evidence>
<evidence type="ECO:0000305" key="8"/>
<evidence type="ECO:0000305" key="9">
    <source ref="7"/>
</evidence>
<evidence type="ECO:0007829" key="10">
    <source>
        <dbReference type="PDB" id="5C40"/>
    </source>
</evidence>
<sequence length="322" mass="34143">MAASGEPQRQWQEEVAAVVVVGSCMTDLVSLTSRLPKTGETIHGHKFFIGFGGKGANQCVQAARLGAMTSMVCKVGKDSFGNDYIENLKQNDISTEFTYQTKDAATGTASIIVNNEGQNIIVIVAGANLLLNTEDLRAAANVISRAKVMVCQLEITPATSLEALTMARRSGVKTLFNPAPAIADLDPQFYTLSDVFCCNESEAEILTGLTVGSAADAGEAALVLLKRGCQVVIITLGAEGCVVLSQTEPEPKHIPTEKVKAVDTTGAGDSFVGALAFYLAYYPNLSLEDMLNRSNFIAAVSVQAAGTQSSYPYKKDLPLTLF</sequence>